<dbReference type="EC" id="2.7.4.8"/>
<dbReference type="EMBL" id="AE003852">
    <property type="protein sequence ID" value="AAF95848.1"/>
    <property type="status" value="ALT_INIT"/>
    <property type="molecule type" value="Genomic_DNA"/>
</dbReference>
<dbReference type="PIR" id="H82043">
    <property type="entry name" value="H82043"/>
</dbReference>
<dbReference type="RefSeq" id="NP_232335.2">
    <property type="nucleotide sequence ID" value="NC_002505.1"/>
</dbReference>
<dbReference type="RefSeq" id="WP_000515790.1">
    <property type="nucleotide sequence ID" value="NZ_LT906614.1"/>
</dbReference>
<dbReference type="SMR" id="Q9KNM4"/>
<dbReference type="STRING" id="243277.VC_2708"/>
<dbReference type="DNASU" id="2615536"/>
<dbReference type="EnsemblBacteria" id="AAF95848">
    <property type="protein sequence ID" value="AAF95848"/>
    <property type="gene ID" value="VC_2708"/>
</dbReference>
<dbReference type="KEGG" id="vch:VC_2708"/>
<dbReference type="PATRIC" id="fig|243277.26.peg.2583"/>
<dbReference type="eggNOG" id="COG0194">
    <property type="taxonomic scope" value="Bacteria"/>
</dbReference>
<dbReference type="HOGENOM" id="CLU_001715_1_0_6"/>
<dbReference type="Proteomes" id="UP000000584">
    <property type="component" value="Chromosome 1"/>
</dbReference>
<dbReference type="GO" id="GO:0005829">
    <property type="term" value="C:cytosol"/>
    <property type="evidence" value="ECO:0000318"/>
    <property type="project" value="GO_Central"/>
</dbReference>
<dbReference type="GO" id="GO:0005524">
    <property type="term" value="F:ATP binding"/>
    <property type="evidence" value="ECO:0007669"/>
    <property type="project" value="UniProtKB-UniRule"/>
</dbReference>
<dbReference type="GO" id="GO:0004385">
    <property type="term" value="F:guanylate kinase activity"/>
    <property type="evidence" value="ECO:0000318"/>
    <property type="project" value="GO_Central"/>
</dbReference>
<dbReference type="CDD" id="cd00071">
    <property type="entry name" value="GMPK"/>
    <property type="match status" value="1"/>
</dbReference>
<dbReference type="FunFam" id="3.40.50.300:FF:000855">
    <property type="entry name" value="Guanylate kinase"/>
    <property type="match status" value="1"/>
</dbReference>
<dbReference type="FunFam" id="3.30.63.10:FF:000002">
    <property type="entry name" value="Guanylate kinase 1"/>
    <property type="match status" value="1"/>
</dbReference>
<dbReference type="Gene3D" id="3.30.63.10">
    <property type="entry name" value="Guanylate Kinase phosphate binding domain"/>
    <property type="match status" value="1"/>
</dbReference>
<dbReference type="Gene3D" id="3.40.50.300">
    <property type="entry name" value="P-loop containing nucleotide triphosphate hydrolases"/>
    <property type="match status" value="1"/>
</dbReference>
<dbReference type="HAMAP" id="MF_00328">
    <property type="entry name" value="Guanylate_kinase"/>
    <property type="match status" value="1"/>
</dbReference>
<dbReference type="InterPro" id="IPR008145">
    <property type="entry name" value="GK/Ca_channel_bsu"/>
</dbReference>
<dbReference type="InterPro" id="IPR008144">
    <property type="entry name" value="Guanylate_kin-like_dom"/>
</dbReference>
<dbReference type="InterPro" id="IPR017665">
    <property type="entry name" value="Guanylate_kinase"/>
</dbReference>
<dbReference type="InterPro" id="IPR020590">
    <property type="entry name" value="Guanylate_kinase_CS"/>
</dbReference>
<dbReference type="InterPro" id="IPR027417">
    <property type="entry name" value="P-loop_NTPase"/>
</dbReference>
<dbReference type="NCBIfam" id="TIGR03263">
    <property type="entry name" value="guanyl_kin"/>
    <property type="match status" value="1"/>
</dbReference>
<dbReference type="PANTHER" id="PTHR23117:SF13">
    <property type="entry name" value="GUANYLATE KINASE"/>
    <property type="match status" value="1"/>
</dbReference>
<dbReference type="PANTHER" id="PTHR23117">
    <property type="entry name" value="GUANYLATE KINASE-RELATED"/>
    <property type="match status" value="1"/>
</dbReference>
<dbReference type="Pfam" id="PF00625">
    <property type="entry name" value="Guanylate_kin"/>
    <property type="match status" value="1"/>
</dbReference>
<dbReference type="SMART" id="SM00072">
    <property type="entry name" value="GuKc"/>
    <property type="match status" value="1"/>
</dbReference>
<dbReference type="SUPFAM" id="SSF52540">
    <property type="entry name" value="P-loop containing nucleoside triphosphate hydrolases"/>
    <property type="match status" value="1"/>
</dbReference>
<dbReference type="PROSITE" id="PS00856">
    <property type="entry name" value="GUANYLATE_KINASE_1"/>
    <property type="match status" value="1"/>
</dbReference>
<dbReference type="PROSITE" id="PS50052">
    <property type="entry name" value="GUANYLATE_KINASE_2"/>
    <property type="match status" value="1"/>
</dbReference>
<name>KGUA_VIBCH</name>
<keyword id="KW-0067">ATP-binding</keyword>
<keyword id="KW-0963">Cytoplasm</keyword>
<keyword id="KW-0418">Kinase</keyword>
<keyword id="KW-0547">Nucleotide-binding</keyword>
<keyword id="KW-1185">Reference proteome</keyword>
<keyword id="KW-0808">Transferase</keyword>
<gene>
    <name type="primary">gmk</name>
    <name type="ordered locus">VC_2708</name>
</gene>
<feature type="chain" id="PRO_0000170636" description="Guanylate kinase">
    <location>
        <begin position="1"/>
        <end position="207"/>
    </location>
</feature>
<feature type="domain" description="Guanylate kinase-like">
    <location>
        <begin position="4"/>
        <end position="184"/>
    </location>
</feature>
<feature type="binding site" evidence="1">
    <location>
        <begin position="11"/>
        <end position="18"/>
    </location>
    <ligand>
        <name>ATP</name>
        <dbReference type="ChEBI" id="CHEBI:30616"/>
    </ligand>
</feature>
<reference key="1">
    <citation type="journal article" date="2000" name="Nature">
        <title>DNA sequence of both chromosomes of the cholera pathogen Vibrio cholerae.</title>
        <authorList>
            <person name="Heidelberg J.F."/>
            <person name="Eisen J.A."/>
            <person name="Nelson W.C."/>
            <person name="Clayton R.A."/>
            <person name="Gwinn M.L."/>
            <person name="Dodson R.J."/>
            <person name="Haft D.H."/>
            <person name="Hickey E.K."/>
            <person name="Peterson J.D."/>
            <person name="Umayam L.A."/>
            <person name="Gill S.R."/>
            <person name="Nelson K.E."/>
            <person name="Read T.D."/>
            <person name="Tettelin H."/>
            <person name="Richardson D.L."/>
            <person name="Ermolaeva M.D."/>
            <person name="Vamathevan J.J."/>
            <person name="Bass S."/>
            <person name="Qin H."/>
            <person name="Dragoi I."/>
            <person name="Sellers P."/>
            <person name="McDonald L.A."/>
            <person name="Utterback T.R."/>
            <person name="Fleischmann R.D."/>
            <person name="Nierman W.C."/>
            <person name="White O."/>
            <person name="Salzberg S.L."/>
            <person name="Smith H.O."/>
            <person name="Colwell R.R."/>
            <person name="Mekalanos J.J."/>
            <person name="Venter J.C."/>
            <person name="Fraser C.M."/>
        </authorList>
    </citation>
    <scope>NUCLEOTIDE SEQUENCE [LARGE SCALE GENOMIC DNA]</scope>
    <source>
        <strain>ATCC 39315 / El Tor Inaba N16961</strain>
    </source>
</reference>
<reference key="2">
    <citation type="journal article" date="2021" name="Science">
        <title>A third purine biosynthetic pathway encoded by aminoadenine-based viral DNA genomes.</title>
        <authorList>
            <person name="Sleiman D."/>
            <person name="Garcia P.S."/>
            <person name="Lagune M."/>
            <person name="Loc'h J."/>
            <person name="Haouz A."/>
            <person name="Taib N."/>
            <person name="Roethlisberger P."/>
            <person name="Gribaldo S."/>
            <person name="Marliere P."/>
            <person name="Kaminski P.A."/>
        </authorList>
    </citation>
    <scope>FUNCTION (MICROBIAL INFECTION)</scope>
    <scope>CATALYTIC ACTIVITY (MICROBIAL INFECTION)</scope>
</reference>
<organism>
    <name type="scientific">Vibrio cholerae serotype O1 (strain ATCC 39315 / El Tor Inaba N16961)</name>
    <dbReference type="NCBI Taxonomy" id="243277"/>
    <lineage>
        <taxon>Bacteria</taxon>
        <taxon>Pseudomonadati</taxon>
        <taxon>Pseudomonadota</taxon>
        <taxon>Gammaproteobacteria</taxon>
        <taxon>Vibrionales</taxon>
        <taxon>Vibrionaceae</taxon>
        <taxon>Vibrio</taxon>
    </lineage>
</organism>
<proteinExistence type="evidence at protein level"/>
<accession>Q9KNM4</accession>
<sequence>MGKGTLYIVSAPSGAGKSSLIAALLEQNPTYAMKVSVSHTTRGMRPGEQDGVHYHFVEKEHFIELIGKGEFLEYAEVFGNYYGTSRVWIENTLNKGIDVFLDIDWQGARQIRSQMPEAKSIFILPPSKEELERRLNTRGQDSDAVIAKRMGEAKSEISHYSEYDYVIINDDFDVALMDFKAIIRAERLKQDKQAAKYSAMLSALLAE</sequence>
<protein>
    <recommendedName>
        <fullName>Guanylate kinase</fullName>
        <ecNumber>2.7.4.8</ecNumber>
    </recommendedName>
    <alternativeName>
        <fullName>GMP kinase</fullName>
    </alternativeName>
</protein>
<evidence type="ECO:0000250" key="1"/>
<evidence type="ECO:0000269" key="2">
    <source>
    </source>
</evidence>
<evidence type="ECO:0000305" key="3"/>
<comment type="function">
    <text evidence="1">Essential for recycling GMP and indirectly, cGMP.</text>
</comment>
<comment type="function">
    <text evidence="2">(Microbial infection) Catalyzes the phosphorylation of dZMP to dZDP, when the bacterium is infected by a phage that produces the substrate for the synthesis of dZTP (2- amino-2'-deoxyadenosine 5'-triphosphate), which is then used by the phage as a DNA polymerase substrate.</text>
</comment>
<comment type="catalytic activity">
    <reaction>
        <text>GMP + ATP = GDP + ADP</text>
        <dbReference type="Rhea" id="RHEA:20780"/>
        <dbReference type="ChEBI" id="CHEBI:30616"/>
        <dbReference type="ChEBI" id="CHEBI:58115"/>
        <dbReference type="ChEBI" id="CHEBI:58189"/>
        <dbReference type="ChEBI" id="CHEBI:456216"/>
        <dbReference type="EC" id="2.7.4.8"/>
    </reaction>
</comment>
<comment type="catalytic activity">
    <reaction evidence="2">
        <text>dZMP + ATP = dZDP + ADP</text>
        <dbReference type="Rhea" id="RHEA:67640"/>
        <dbReference type="ChEBI" id="CHEBI:30616"/>
        <dbReference type="ChEBI" id="CHEBI:172927"/>
        <dbReference type="ChEBI" id="CHEBI:172929"/>
        <dbReference type="ChEBI" id="CHEBI:456216"/>
    </reaction>
</comment>
<comment type="pathway">
    <text evidence="2">Purine metabolism.</text>
</comment>
<comment type="subcellular location">
    <subcellularLocation>
        <location evidence="1">Cytoplasm</location>
    </subcellularLocation>
</comment>
<comment type="similarity">
    <text evidence="3">Belongs to the guanylate kinase family.</text>
</comment>
<comment type="sequence caution" evidence="3">
    <conflict type="erroneous initiation">
        <sequence resource="EMBL-CDS" id="AAF95848"/>
    </conflict>
</comment>